<feature type="chain" id="PRO_0000296074" description="Small ribosomal subunit protein uS12cz">
    <location>
        <begin position="1"/>
        <end position="123"/>
    </location>
</feature>
<accession>A4QJV5</accession>
<organism>
    <name type="scientific">Olimarabidopsis pumila</name>
    <name type="common">Dwarf rocket</name>
    <name type="synonym">Arabidopsis griffithiana</name>
    <dbReference type="NCBI Taxonomy" id="74718"/>
    <lineage>
        <taxon>Eukaryota</taxon>
        <taxon>Viridiplantae</taxon>
        <taxon>Streptophyta</taxon>
        <taxon>Embryophyta</taxon>
        <taxon>Tracheophyta</taxon>
        <taxon>Spermatophyta</taxon>
        <taxon>Magnoliopsida</taxon>
        <taxon>eudicotyledons</taxon>
        <taxon>Gunneridae</taxon>
        <taxon>Pentapetalae</taxon>
        <taxon>rosids</taxon>
        <taxon>malvids</taxon>
        <taxon>Brassicales</taxon>
        <taxon>Brassicaceae</taxon>
        <taxon>Alyssopsideae</taxon>
        <taxon>Olimarabidopsis</taxon>
    </lineage>
</organism>
<reference key="1">
    <citation type="submission" date="2007-03" db="EMBL/GenBank/DDBJ databases">
        <title>Sequence analysis of Arabidopsis pumila JS2 chloroplast DNA.</title>
        <authorList>
            <person name="Hosouchi T."/>
            <person name="Tsuruoka H."/>
            <person name="Kotani H."/>
        </authorList>
    </citation>
    <scope>NUCLEOTIDE SEQUENCE [LARGE SCALE GENOMIC DNA]</scope>
</reference>
<geneLocation type="chloroplast"/>
<proteinExistence type="inferred from homology"/>
<sequence>MPTIKQLIRNTRQPIRNVTKSPALRGCPQRRGTCTRVYTITPKKPNSALRKVARVRLTSGFEITAYIPGIGHNLQEHSVVLVRGGRVKDLPGVRYHIVRGTLDAVGVKDRQQGRSKYGVKKPK</sequence>
<comment type="function">
    <text evidence="1">With S4 and S5 plays an important role in translational accuracy. Located at the interface of the 30S and 50S subunits (By similarity).</text>
</comment>
<comment type="subunit">
    <text evidence="1">Part of the 30S ribosomal subunit.</text>
</comment>
<comment type="subcellular location">
    <subcellularLocation>
        <location>Plastid</location>
        <location>Chloroplast</location>
    </subcellularLocation>
</comment>
<comment type="similarity">
    <text evidence="3">Belongs to the universal ribosomal protein uS12 family.</text>
</comment>
<comment type="caution">
    <text evidence="3">There is 1 gene for this protein in each of the chloroplast inverted repeats; while they are usually identical, in this organism they are not. The other copy is AC A4QJX7.</text>
</comment>
<dbReference type="EMBL" id="AP009368">
    <property type="protein sequence ID" value="BAF49963.1"/>
    <property type="molecule type" value="Genomic_DNA"/>
</dbReference>
<dbReference type="SMR" id="A4QJV5"/>
<dbReference type="GO" id="GO:0009507">
    <property type="term" value="C:chloroplast"/>
    <property type="evidence" value="ECO:0007669"/>
    <property type="project" value="UniProtKB-SubCell"/>
</dbReference>
<dbReference type="GO" id="GO:0015935">
    <property type="term" value="C:small ribosomal subunit"/>
    <property type="evidence" value="ECO:0007669"/>
    <property type="project" value="InterPro"/>
</dbReference>
<dbReference type="GO" id="GO:0019843">
    <property type="term" value="F:rRNA binding"/>
    <property type="evidence" value="ECO:0007669"/>
    <property type="project" value="UniProtKB-UniRule"/>
</dbReference>
<dbReference type="GO" id="GO:0003735">
    <property type="term" value="F:structural constituent of ribosome"/>
    <property type="evidence" value="ECO:0007669"/>
    <property type="project" value="InterPro"/>
</dbReference>
<dbReference type="GO" id="GO:0006412">
    <property type="term" value="P:translation"/>
    <property type="evidence" value="ECO:0007669"/>
    <property type="project" value="UniProtKB-UniRule"/>
</dbReference>
<dbReference type="CDD" id="cd03368">
    <property type="entry name" value="Ribosomal_S12"/>
    <property type="match status" value="1"/>
</dbReference>
<dbReference type="FunFam" id="2.40.50.140:FF:000008">
    <property type="entry name" value="30S ribosomal protein S12, chloroplastic"/>
    <property type="match status" value="1"/>
</dbReference>
<dbReference type="Gene3D" id="2.40.50.140">
    <property type="entry name" value="Nucleic acid-binding proteins"/>
    <property type="match status" value="1"/>
</dbReference>
<dbReference type="HAMAP" id="MF_00403_B">
    <property type="entry name" value="Ribosomal_uS12_B"/>
    <property type="match status" value="1"/>
</dbReference>
<dbReference type="InterPro" id="IPR012340">
    <property type="entry name" value="NA-bd_OB-fold"/>
</dbReference>
<dbReference type="InterPro" id="IPR006032">
    <property type="entry name" value="Ribosomal_uS12"/>
</dbReference>
<dbReference type="InterPro" id="IPR005679">
    <property type="entry name" value="Ribosomal_uS12_bac"/>
</dbReference>
<dbReference type="NCBIfam" id="TIGR00981">
    <property type="entry name" value="rpsL_bact"/>
    <property type="match status" value="1"/>
</dbReference>
<dbReference type="PANTHER" id="PTHR11652">
    <property type="entry name" value="30S RIBOSOMAL PROTEIN S12 FAMILY MEMBER"/>
    <property type="match status" value="1"/>
</dbReference>
<dbReference type="Pfam" id="PF00164">
    <property type="entry name" value="Ribosom_S12_S23"/>
    <property type="match status" value="1"/>
</dbReference>
<dbReference type="PIRSF" id="PIRSF002133">
    <property type="entry name" value="Ribosomal_S12/S23"/>
    <property type="match status" value="1"/>
</dbReference>
<dbReference type="PRINTS" id="PR01034">
    <property type="entry name" value="RIBOSOMALS12"/>
</dbReference>
<dbReference type="SUPFAM" id="SSF50249">
    <property type="entry name" value="Nucleic acid-binding proteins"/>
    <property type="match status" value="1"/>
</dbReference>
<dbReference type="PROSITE" id="PS00055">
    <property type="entry name" value="RIBOSOMAL_S12"/>
    <property type="match status" value="1"/>
</dbReference>
<protein>
    <recommendedName>
        <fullName evidence="2">Small ribosomal subunit protein uS12cz</fullName>
    </recommendedName>
    <alternativeName>
        <fullName evidence="3">30S ribosomal protein S12-A, chloroplastic</fullName>
    </alternativeName>
</protein>
<evidence type="ECO:0000250" key="1"/>
<evidence type="ECO:0000255" key="2">
    <source>
        <dbReference type="HAMAP-Rule" id="MF_00403"/>
    </source>
</evidence>
<evidence type="ECO:0000305" key="3"/>
<gene>
    <name type="primary">rps12-A</name>
</gene>
<keyword id="KW-0150">Chloroplast</keyword>
<keyword id="KW-0934">Plastid</keyword>
<keyword id="KW-0687">Ribonucleoprotein</keyword>
<keyword id="KW-0689">Ribosomal protein</keyword>
<keyword id="KW-0694">RNA-binding</keyword>
<keyword id="KW-0699">rRNA-binding</keyword>
<name>RR12A_OLIPU</name>